<reference key="1">
    <citation type="submission" date="2002-12" db="EMBL/GenBank/DDBJ databases">
        <title>Complete genome sequence of Vibrio vulnificus CMCP6.</title>
        <authorList>
            <person name="Rhee J.H."/>
            <person name="Kim S.Y."/>
            <person name="Chung S.S."/>
            <person name="Kim J.J."/>
            <person name="Moon Y.H."/>
            <person name="Jeong H."/>
            <person name="Choy H.E."/>
        </authorList>
    </citation>
    <scope>NUCLEOTIDE SEQUENCE [LARGE SCALE GENOMIC DNA]</scope>
    <source>
        <strain>CMCP6</strain>
    </source>
</reference>
<feature type="chain" id="PRO_0000112682" description="Acetylglutamate kinase">
    <location>
        <begin position="1"/>
        <end position="263"/>
    </location>
</feature>
<feature type="binding site" evidence="1">
    <location>
        <begin position="48"/>
        <end position="49"/>
    </location>
    <ligand>
        <name>substrate</name>
    </ligand>
</feature>
<feature type="binding site" evidence="1">
    <location>
        <position position="70"/>
    </location>
    <ligand>
        <name>substrate</name>
    </ligand>
</feature>
<feature type="binding site" evidence="1">
    <location>
        <position position="162"/>
    </location>
    <ligand>
        <name>substrate</name>
    </ligand>
</feature>
<feature type="site" description="Transition state stabilizer" evidence="1">
    <location>
        <position position="12"/>
    </location>
</feature>
<feature type="site" description="Transition state stabilizer" evidence="1">
    <location>
        <position position="221"/>
    </location>
</feature>
<comment type="function">
    <text evidence="1">Catalyzes the ATP-dependent phosphorylation of N-acetyl-L-glutamate.</text>
</comment>
<comment type="catalytic activity">
    <reaction evidence="1">
        <text>N-acetyl-L-glutamate + ATP = N-acetyl-L-glutamyl 5-phosphate + ADP</text>
        <dbReference type="Rhea" id="RHEA:14629"/>
        <dbReference type="ChEBI" id="CHEBI:30616"/>
        <dbReference type="ChEBI" id="CHEBI:44337"/>
        <dbReference type="ChEBI" id="CHEBI:57936"/>
        <dbReference type="ChEBI" id="CHEBI:456216"/>
        <dbReference type="EC" id="2.7.2.8"/>
    </reaction>
</comment>
<comment type="pathway">
    <text evidence="1">Amino-acid biosynthesis; L-arginine biosynthesis; N(2)-acetyl-L-ornithine from L-glutamate: step 2/4.</text>
</comment>
<comment type="subcellular location">
    <subcellularLocation>
        <location evidence="1">Cytoplasm</location>
    </subcellularLocation>
</comment>
<comment type="similarity">
    <text evidence="1">Belongs to the acetylglutamate kinase family. ArgB subfamily.</text>
</comment>
<name>ARGB_VIBVU</name>
<dbReference type="EC" id="2.7.2.8" evidence="1"/>
<dbReference type="EMBL" id="AE016795">
    <property type="protein sequence ID" value="AAO09821.1"/>
    <property type="molecule type" value="Genomic_DNA"/>
</dbReference>
<dbReference type="RefSeq" id="WP_011079346.1">
    <property type="nucleotide sequence ID" value="NC_004459.3"/>
</dbReference>
<dbReference type="SMR" id="P59304"/>
<dbReference type="GeneID" id="93895635"/>
<dbReference type="KEGG" id="vvu:VV1_1372"/>
<dbReference type="HOGENOM" id="CLU_053680_1_1_6"/>
<dbReference type="UniPathway" id="UPA00068">
    <property type="reaction ID" value="UER00107"/>
</dbReference>
<dbReference type="Proteomes" id="UP000002275">
    <property type="component" value="Chromosome 1"/>
</dbReference>
<dbReference type="GO" id="GO:0005737">
    <property type="term" value="C:cytoplasm"/>
    <property type="evidence" value="ECO:0007669"/>
    <property type="project" value="UniProtKB-SubCell"/>
</dbReference>
<dbReference type="GO" id="GO:0003991">
    <property type="term" value="F:acetylglutamate kinase activity"/>
    <property type="evidence" value="ECO:0007669"/>
    <property type="project" value="UniProtKB-UniRule"/>
</dbReference>
<dbReference type="GO" id="GO:0005524">
    <property type="term" value="F:ATP binding"/>
    <property type="evidence" value="ECO:0007669"/>
    <property type="project" value="UniProtKB-UniRule"/>
</dbReference>
<dbReference type="GO" id="GO:0042450">
    <property type="term" value="P:arginine biosynthetic process via ornithine"/>
    <property type="evidence" value="ECO:0007669"/>
    <property type="project" value="UniProtKB-UniRule"/>
</dbReference>
<dbReference type="GO" id="GO:0006526">
    <property type="term" value="P:L-arginine biosynthetic process"/>
    <property type="evidence" value="ECO:0007669"/>
    <property type="project" value="UniProtKB-UniPathway"/>
</dbReference>
<dbReference type="CDD" id="cd04249">
    <property type="entry name" value="AAK_NAGK-NC"/>
    <property type="match status" value="1"/>
</dbReference>
<dbReference type="Gene3D" id="3.40.1160.10">
    <property type="entry name" value="Acetylglutamate kinase-like"/>
    <property type="match status" value="1"/>
</dbReference>
<dbReference type="HAMAP" id="MF_00082">
    <property type="entry name" value="ArgB"/>
    <property type="match status" value="1"/>
</dbReference>
<dbReference type="InterPro" id="IPR036393">
    <property type="entry name" value="AceGlu_kinase-like_sf"/>
</dbReference>
<dbReference type="InterPro" id="IPR004662">
    <property type="entry name" value="AcgluKinase_fam"/>
</dbReference>
<dbReference type="InterPro" id="IPR037528">
    <property type="entry name" value="ArgB"/>
</dbReference>
<dbReference type="InterPro" id="IPR001048">
    <property type="entry name" value="Asp/Glu/Uridylate_kinase"/>
</dbReference>
<dbReference type="InterPro" id="IPR041731">
    <property type="entry name" value="NAGK-NC"/>
</dbReference>
<dbReference type="NCBIfam" id="TIGR00761">
    <property type="entry name" value="argB"/>
    <property type="match status" value="1"/>
</dbReference>
<dbReference type="PANTHER" id="PTHR23342">
    <property type="entry name" value="N-ACETYLGLUTAMATE SYNTHASE"/>
    <property type="match status" value="1"/>
</dbReference>
<dbReference type="PANTHER" id="PTHR23342:SF0">
    <property type="entry name" value="N-ACETYLGLUTAMATE SYNTHASE, MITOCHONDRIAL"/>
    <property type="match status" value="1"/>
</dbReference>
<dbReference type="Pfam" id="PF00696">
    <property type="entry name" value="AA_kinase"/>
    <property type="match status" value="1"/>
</dbReference>
<dbReference type="PIRSF" id="PIRSF000728">
    <property type="entry name" value="NAGK"/>
    <property type="match status" value="1"/>
</dbReference>
<dbReference type="SUPFAM" id="SSF53633">
    <property type="entry name" value="Carbamate kinase-like"/>
    <property type="match status" value="1"/>
</dbReference>
<protein>
    <recommendedName>
        <fullName evidence="1">Acetylglutamate kinase</fullName>
        <ecNumber evidence="1">2.7.2.8</ecNumber>
    </recommendedName>
    <alternativeName>
        <fullName evidence="1">N-acetyl-L-glutamate 5-phosphotransferase</fullName>
    </alternativeName>
    <alternativeName>
        <fullName evidence="1">NAG kinase</fullName>
        <shortName evidence="1">NAGK</shortName>
    </alternativeName>
</protein>
<organism>
    <name type="scientific">Vibrio vulnificus (strain CMCP6)</name>
    <dbReference type="NCBI Taxonomy" id="216895"/>
    <lineage>
        <taxon>Bacteria</taxon>
        <taxon>Pseudomonadati</taxon>
        <taxon>Pseudomonadota</taxon>
        <taxon>Gammaproteobacteria</taxon>
        <taxon>Vibrionales</taxon>
        <taxon>Vibrionaceae</taxon>
        <taxon>Vibrio</taxon>
    </lineage>
</organism>
<keyword id="KW-0028">Amino-acid biosynthesis</keyword>
<keyword id="KW-0055">Arginine biosynthesis</keyword>
<keyword id="KW-0067">ATP-binding</keyword>
<keyword id="KW-0963">Cytoplasm</keyword>
<keyword id="KW-0418">Kinase</keyword>
<keyword id="KW-0547">Nucleotide-binding</keyword>
<keyword id="KW-0808">Transferase</keyword>
<gene>
    <name evidence="1" type="primary">argB</name>
    <name type="ordered locus">VV1_1372</name>
</gene>
<accession>P59304</accession>
<proteinExistence type="inferred from homology"/>
<evidence type="ECO:0000255" key="1">
    <source>
        <dbReference type="HAMAP-Rule" id="MF_00082"/>
    </source>
</evidence>
<sequence>MTQPSLNPLVIKLGGAALSCSQTLSQLFGAIASYQQKEQRQIVIVHGGGYLVDELMEKLQLPTVKKNGLRVTPYDQIPLIAGALAGTANKLLQGQAMADGLNAIGLSLADGGLCQVEELDPELGAVGKATPGDSSLLQTILNAGALPIISSIGLTAQGQLMNVNADQAAVAVAGALDAQLVLLSDVSGVLDGKGHLIKSLNQQEADALIAGKVITDGMIVKVQAALEAANDLGRAIEVATWRYPENLEKLFAGESIGTQFLPA</sequence>